<sequence length="172" mass="19816">MKRFLLPFVMMLVFSAESIFTDLVHFPFVTDDQVLAPRFLMLVLIFMSAFINQKHAMIYGFIFGFLYDMNYTSLLGVYMFGFAGLCYLASKAFKVLHTNAFVVILIAVLAVCLLEFYVFGIQSLIHKDIMTFNGFVLDRFIPTILLNIAAALILVLPFRLFFMSLKKELRDE</sequence>
<gene>
    <name type="primary">mreD</name>
    <name type="synonym">rodB</name>
    <name type="ordered locus">BSU28010</name>
</gene>
<evidence type="ECO:0000250" key="1"/>
<evidence type="ECO:0000255" key="2"/>
<evidence type="ECO:0000305" key="3"/>
<protein>
    <recommendedName>
        <fullName>Rod shape-determining protein MreD</fullName>
    </recommendedName>
</protein>
<feature type="chain" id="PRO_0000062769" description="Rod shape-determining protein MreD">
    <location>
        <begin position="1"/>
        <end position="172"/>
    </location>
</feature>
<feature type="transmembrane region" description="Helical" evidence="2">
    <location>
        <begin position="4"/>
        <end position="24"/>
    </location>
</feature>
<feature type="transmembrane region" description="Helical" evidence="2">
    <location>
        <begin position="33"/>
        <end position="53"/>
    </location>
</feature>
<feature type="transmembrane region" description="Helical" evidence="2">
    <location>
        <begin position="57"/>
        <end position="77"/>
    </location>
</feature>
<feature type="transmembrane region" description="Helical" evidence="2">
    <location>
        <begin position="101"/>
        <end position="121"/>
    </location>
</feature>
<feature type="transmembrane region" description="Helical" evidence="2">
    <location>
        <begin position="143"/>
        <end position="163"/>
    </location>
</feature>
<keyword id="KW-1003">Cell membrane</keyword>
<keyword id="KW-0133">Cell shape</keyword>
<keyword id="KW-0472">Membrane</keyword>
<keyword id="KW-1185">Reference proteome</keyword>
<keyword id="KW-0812">Transmembrane</keyword>
<keyword id="KW-1133">Transmembrane helix</keyword>
<name>MRED_BACSU</name>
<reference key="1">
    <citation type="journal article" date="1992" name="J. Bacteriol.">
        <title>The divIVB region of the Bacillus subtilis chromosome encodes homologs of Escherichia coli septum placement (minCD) and cell shape (mreBCD) determinants.</title>
        <authorList>
            <person name="Varley A.W."/>
            <person name="Stewart G.C."/>
        </authorList>
    </citation>
    <scope>NUCLEOTIDE SEQUENCE [GENOMIC DNA]</scope>
    <source>
        <strain>168</strain>
    </source>
</reference>
<reference key="2">
    <citation type="journal article" date="1992" name="J. Bacteriol.">
        <title>Identification of Bacillus subtilis genes for septum placement and shape determination.</title>
        <authorList>
            <person name="Levin P.A."/>
            <person name="Margolis P.S."/>
            <person name="Setlow P."/>
            <person name="Losick R."/>
            <person name="Sun D."/>
        </authorList>
    </citation>
    <scope>NUCLEOTIDE SEQUENCE [GENOMIC DNA]</scope>
</reference>
<reference key="3">
    <citation type="journal article" date="1997" name="Nature">
        <title>The complete genome sequence of the Gram-positive bacterium Bacillus subtilis.</title>
        <authorList>
            <person name="Kunst F."/>
            <person name="Ogasawara N."/>
            <person name="Moszer I."/>
            <person name="Albertini A.M."/>
            <person name="Alloni G."/>
            <person name="Azevedo V."/>
            <person name="Bertero M.G."/>
            <person name="Bessieres P."/>
            <person name="Bolotin A."/>
            <person name="Borchert S."/>
            <person name="Borriss R."/>
            <person name="Boursier L."/>
            <person name="Brans A."/>
            <person name="Braun M."/>
            <person name="Brignell S.C."/>
            <person name="Bron S."/>
            <person name="Brouillet S."/>
            <person name="Bruschi C.V."/>
            <person name="Caldwell B."/>
            <person name="Capuano V."/>
            <person name="Carter N.M."/>
            <person name="Choi S.-K."/>
            <person name="Codani J.-J."/>
            <person name="Connerton I.F."/>
            <person name="Cummings N.J."/>
            <person name="Daniel R.A."/>
            <person name="Denizot F."/>
            <person name="Devine K.M."/>
            <person name="Duesterhoeft A."/>
            <person name="Ehrlich S.D."/>
            <person name="Emmerson P.T."/>
            <person name="Entian K.-D."/>
            <person name="Errington J."/>
            <person name="Fabret C."/>
            <person name="Ferrari E."/>
            <person name="Foulger D."/>
            <person name="Fritz C."/>
            <person name="Fujita M."/>
            <person name="Fujita Y."/>
            <person name="Fuma S."/>
            <person name="Galizzi A."/>
            <person name="Galleron N."/>
            <person name="Ghim S.-Y."/>
            <person name="Glaser P."/>
            <person name="Goffeau A."/>
            <person name="Golightly E.J."/>
            <person name="Grandi G."/>
            <person name="Guiseppi G."/>
            <person name="Guy B.J."/>
            <person name="Haga K."/>
            <person name="Haiech J."/>
            <person name="Harwood C.R."/>
            <person name="Henaut A."/>
            <person name="Hilbert H."/>
            <person name="Holsappel S."/>
            <person name="Hosono S."/>
            <person name="Hullo M.-F."/>
            <person name="Itaya M."/>
            <person name="Jones L.-M."/>
            <person name="Joris B."/>
            <person name="Karamata D."/>
            <person name="Kasahara Y."/>
            <person name="Klaerr-Blanchard M."/>
            <person name="Klein C."/>
            <person name="Kobayashi Y."/>
            <person name="Koetter P."/>
            <person name="Koningstein G."/>
            <person name="Krogh S."/>
            <person name="Kumano M."/>
            <person name="Kurita K."/>
            <person name="Lapidus A."/>
            <person name="Lardinois S."/>
            <person name="Lauber J."/>
            <person name="Lazarevic V."/>
            <person name="Lee S.-M."/>
            <person name="Levine A."/>
            <person name="Liu H."/>
            <person name="Masuda S."/>
            <person name="Mauel C."/>
            <person name="Medigue C."/>
            <person name="Medina N."/>
            <person name="Mellado R.P."/>
            <person name="Mizuno M."/>
            <person name="Moestl D."/>
            <person name="Nakai S."/>
            <person name="Noback M."/>
            <person name="Noone D."/>
            <person name="O'Reilly M."/>
            <person name="Ogawa K."/>
            <person name="Ogiwara A."/>
            <person name="Oudega B."/>
            <person name="Park S.-H."/>
            <person name="Parro V."/>
            <person name="Pohl T.M."/>
            <person name="Portetelle D."/>
            <person name="Porwollik S."/>
            <person name="Prescott A.M."/>
            <person name="Presecan E."/>
            <person name="Pujic P."/>
            <person name="Purnelle B."/>
            <person name="Rapoport G."/>
            <person name="Rey M."/>
            <person name="Reynolds S."/>
            <person name="Rieger M."/>
            <person name="Rivolta C."/>
            <person name="Rocha E."/>
            <person name="Roche B."/>
            <person name="Rose M."/>
            <person name="Sadaie Y."/>
            <person name="Sato T."/>
            <person name="Scanlan E."/>
            <person name="Schleich S."/>
            <person name="Schroeter R."/>
            <person name="Scoffone F."/>
            <person name="Sekiguchi J."/>
            <person name="Sekowska A."/>
            <person name="Seror S.J."/>
            <person name="Serror P."/>
            <person name="Shin B.-S."/>
            <person name="Soldo B."/>
            <person name="Sorokin A."/>
            <person name="Tacconi E."/>
            <person name="Takagi T."/>
            <person name="Takahashi H."/>
            <person name="Takemaru K."/>
            <person name="Takeuchi M."/>
            <person name="Tamakoshi A."/>
            <person name="Tanaka T."/>
            <person name="Terpstra P."/>
            <person name="Tognoni A."/>
            <person name="Tosato V."/>
            <person name="Uchiyama S."/>
            <person name="Vandenbol M."/>
            <person name="Vannier F."/>
            <person name="Vassarotti A."/>
            <person name="Viari A."/>
            <person name="Wambutt R."/>
            <person name="Wedler E."/>
            <person name="Wedler H."/>
            <person name="Weitzenegger T."/>
            <person name="Winters P."/>
            <person name="Wipat A."/>
            <person name="Yamamoto H."/>
            <person name="Yamane K."/>
            <person name="Yasumoto K."/>
            <person name="Yata K."/>
            <person name="Yoshida K."/>
            <person name="Yoshikawa H.-F."/>
            <person name="Zumstein E."/>
            <person name="Yoshikawa H."/>
            <person name="Danchin A."/>
        </authorList>
    </citation>
    <scope>NUCLEOTIDE SEQUENCE [LARGE SCALE GENOMIC DNA]</scope>
    <source>
        <strain>168</strain>
    </source>
</reference>
<dbReference type="EMBL" id="M95582">
    <property type="protein sequence ID" value="AAA22607.1"/>
    <property type="molecule type" value="Genomic_DNA"/>
</dbReference>
<dbReference type="EMBL" id="M96343">
    <property type="protein sequence ID" value="AAA22399.1"/>
    <property type="molecule type" value="Genomic_DNA"/>
</dbReference>
<dbReference type="EMBL" id="AL009126">
    <property type="protein sequence ID" value="CAB14761.1"/>
    <property type="molecule type" value="Genomic_DNA"/>
</dbReference>
<dbReference type="PIR" id="E45239">
    <property type="entry name" value="E45239"/>
</dbReference>
<dbReference type="RefSeq" id="NP_390679.1">
    <property type="nucleotide sequence ID" value="NC_000964.3"/>
</dbReference>
<dbReference type="RefSeq" id="WP_004398811.1">
    <property type="nucleotide sequence ID" value="NZ_OZ025638.1"/>
</dbReference>
<dbReference type="SMR" id="Q01467"/>
<dbReference type="FunCoup" id="Q01467">
    <property type="interactions" value="54"/>
</dbReference>
<dbReference type="IntAct" id="Q01467">
    <property type="interactions" value="21"/>
</dbReference>
<dbReference type="STRING" id="224308.BSU28010"/>
<dbReference type="TCDB" id="9.B.157.1.1">
    <property type="family name" value="the cell shape-determining mrebcd (mrebcd) family"/>
</dbReference>
<dbReference type="PaxDb" id="224308-BSU28010"/>
<dbReference type="EnsemblBacteria" id="CAB14761">
    <property type="protein sequence ID" value="CAB14761"/>
    <property type="gene ID" value="BSU_28010"/>
</dbReference>
<dbReference type="GeneID" id="936183"/>
<dbReference type="KEGG" id="bsu:BSU28010"/>
<dbReference type="PATRIC" id="fig|224308.179.peg.3043"/>
<dbReference type="eggNOG" id="COG2891">
    <property type="taxonomic scope" value="Bacteria"/>
</dbReference>
<dbReference type="InParanoid" id="Q01467"/>
<dbReference type="OrthoDB" id="1653857at2"/>
<dbReference type="PhylomeDB" id="Q01467"/>
<dbReference type="BioCyc" id="BSUB:BSU28010-MONOMER"/>
<dbReference type="Proteomes" id="UP000001570">
    <property type="component" value="Chromosome"/>
</dbReference>
<dbReference type="GO" id="GO:0005886">
    <property type="term" value="C:plasma membrane"/>
    <property type="evidence" value="ECO:0007669"/>
    <property type="project" value="UniProtKB-SubCell"/>
</dbReference>
<dbReference type="GO" id="GO:0008360">
    <property type="term" value="P:regulation of cell shape"/>
    <property type="evidence" value="ECO:0007669"/>
    <property type="project" value="UniProtKB-KW"/>
</dbReference>
<dbReference type="InterPro" id="IPR007227">
    <property type="entry name" value="Cell_shape_determining_MreD"/>
</dbReference>
<dbReference type="NCBIfam" id="TIGR03426">
    <property type="entry name" value="shape_MreD"/>
    <property type="match status" value="1"/>
</dbReference>
<dbReference type="Pfam" id="PF04093">
    <property type="entry name" value="MreD"/>
    <property type="match status" value="1"/>
</dbReference>
<comment type="function">
    <text evidence="1">Involved in formation of the rod shape of the cell. May also contribute to regulation of formation of penicillin-binding proteins (By similarity).</text>
</comment>
<comment type="interaction">
    <interactant intactId="EBI-5246853">
        <id>Q01467</id>
    </interactant>
    <interactant intactId="EBI-6401700">
        <id>P42954</id>
        <label>tagH</label>
    </interactant>
    <organismsDiffer>false</organismsDiffer>
    <experiments>3</experiments>
</comment>
<comment type="interaction">
    <interactant intactId="EBI-5246853">
        <id>Q01467</id>
    </interactant>
    <interactant intactId="EBI-6401688">
        <id>O34753</id>
        <label>tagO</label>
    </interactant>
    <organismsDiffer>false</organismsDiffer>
    <experiments>3</experiments>
</comment>
<comment type="subcellular location">
    <subcellularLocation>
        <location>Cell membrane</location>
        <topology>Multi-pass membrane protein</topology>
    </subcellularLocation>
</comment>
<comment type="similarity">
    <text evidence="3">Belongs to the MreD family.</text>
</comment>
<organism>
    <name type="scientific">Bacillus subtilis (strain 168)</name>
    <dbReference type="NCBI Taxonomy" id="224308"/>
    <lineage>
        <taxon>Bacteria</taxon>
        <taxon>Bacillati</taxon>
        <taxon>Bacillota</taxon>
        <taxon>Bacilli</taxon>
        <taxon>Bacillales</taxon>
        <taxon>Bacillaceae</taxon>
        <taxon>Bacillus</taxon>
    </lineage>
</organism>
<accession>Q01467</accession>
<proteinExistence type="evidence at protein level"/>